<dbReference type="EC" id="2.5.1.141" evidence="1"/>
<dbReference type="EMBL" id="CP000030">
    <property type="protein sequence ID" value="AAV86892.1"/>
    <property type="molecule type" value="Genomic_DNA"/>
</dbReference>
<dbReference type="SMR" id="Q5P9Y8"/>
<dbReference type="KEGG" id="ama:AM1009"/>
<dbReference type="PATRIC" id="fig|320483.3.peg.877"/>
<dbReference type="HOGENOM" id="CLU_029631_0_2_5"/>
<dbReference type="UniPathway" id="UPA00834">
    <property type="reaction ID" value="UER00712"/>
</dbReference>
<dbReference type="GO" id="GO:0005886">
    <property type="term" value="C:plasma membrane"/>
    <property type="evidence" value="ECO:0007669"/>
    <property type="project" value="UniProtKB-SubCell"/>
</dbReference>
<dbReference type="GO" id="GO:0008495">
    <property type="term" value="F:protoheme IX farnesyltransferase activity"/>
    <property type="evidence" value="ECO:0007669"/>
    <property type="project" value="UniProtKB-UniRule"/>
</dbReference>
<dbReference type="GO" id="GO:0048034">
    <property type="term" value="P:heme O biosynthetic process"/>
    <property type="evidence" value="ECO:0007669"/>
    <property type="project" value="UniProtKB-UniRule"/>
</dbReference>
<dbReference type="CDD" id="cd13957">
    <property type="entry name" value="PT_UbiA_Cox10"/>
    <property type="match status" value="1"/>
</dbReference>
<dbReference type="Gene3D" id="1.10.357.140">
    <property type="entry name" value="UbiA prenyltransferase"/>
    <property type="match status" value="1"/>
</dbReference>
<dbReference type="HAMAP" id="MF_00154">
    <property type="entry name" value="CyoE_CtaB"/>
    <property type="match status" value="1"/>
</dbReference>
<dbReference type="InterPro" id="IPR006369">
    <property type="entry name" value="Protohaem_IX_farnesylTrfase"/>
</dbReference>
<dbReference type="InterPro" id="IPR000537">
    <property type="entry name" value="UbiA_prenyltransferase"/>
</dbReference>
<dbReference type="InterPro" id="IPR030470">
    <property type="entry name" value="UbiA_prenylTrfase_CS"/>
</dbReference>
<dbReference type="InterPro" id="IPR044878">
    <property type="entry name" value="UbiA_sf"/>
</dbReference>
<dbReference type="NCBIfam" id="TIGR01473">
    <property type="entry name" value="cyoE_ctaB"/>
    <property type="match status" value="1"/>
</dbReference>
<dbReference type="NCBIfam" id="NF003349">
    <property type="entry name" value="PRK04375.1-2"/>
    <property type="match status" value="1"/>
</dbReference>
<dbReference type="PANTHER" id="PTHR43448:SF7">
    <property type="entry name" value="4-HYDROXYBENZOATE SOLANESYLTRANSFERASE"/>
    <property type="match status" value="1"/>
</dbReference>
<dbReference type="PANTHER" id="PTHR43448">
    <property type="entry name" value="PROTOHEME IX FARNESYLTRANSFERASE, MITOCHONDRIAL"/>
    <property type="match status" value="1"/>
</dbReference>
<dbReference type="Pfam" id="PF01040">
    <property type="entry name" value="UbiA"/>
    <property type="match status" value="1"/>
</dbReference>
<dbReference type="PROSITE" id="PS00943">
    <property type="entry name" value="UBIA"/>
    <property type="match status" value="1"/>
</dbReference>
<sequence>MTATFIKTSRGKSPASLSSVGDYVQLLKPRIMCLVVFTAITGMLIAPGTIHPLIGLVSTVCVALGAGAAGAFNMWYDSDIDAIMDRTKGRPIPAGKICREQAWECGMVLATLSVFVMAIAVNYVSALLLAGSIFSYAVVYTMLLKRRTPQNIVIGGIAGAFPPVIGWASVSGTLSLESLSLFAIIFVWTPPHFWAIALLTLEEYKKANVPMLPVYCIRKTRSHILLYSIILAVVGATPGLFVKHPVLYEILATGLSATFIAYAIAVFREKGQPSHKACMGLFKYSIYYLFLLFAVVIACVH</sequence>
<evidence type="ECO:0000255" key="1">
    <source>
        <dbReference type="HAMAP-Rule" id="MF_00154"/>
    </source>
</evidence>
<feature type="chain" id="PRO_0000326993" description="Protoheme IX farnesyltransferase">
    <location>
        <begin position="1"/>
        <end position="301"/>
    </location>
</feature>
<feature type="transmembrane region" description="Helical" evidence="1">
    <location>
        <begin position="34"/>
        <end position="54"/>
    </location>
</feature>
<feature type="transmembrane region" description="Helical" evidence="1">
    <location>
        <begin position="55"/>
        <end position="75"/>
    </location>
</feature>
<feature type="transmembrane region" description="Helical" evidence="1">
    <location>
        <begin position="102"/>
        <end position="121"/>
    </location>
</feature>
<feature type="transmembrane region" description="Helical" evidence="1">
    <location>
        <begin position="125"/>
        <end position="144"/>
    </location>
</feature>
<feature type="transmembrane region" description="Helical" evidence="1">
    <location>
        <begin position="152"/>
        <end position="172"/>
    </location>
</feature>
<feature type="transmembrane region" description="Helical" evidence="1">
    <location>
        <begin position="181"/>
        <end position="201"/>
    </location>
</feature>
<feature type="transmembrane region" description="Helical" evidence="1">
    <location>
        <begin position="222"/>
        <end position="242"/>
    </location>
</feature>
<feature type="transmembrane region" description="Helical" evidence="1">
    <location>
        <begin position="247"/>
        <end position="267"/>
    </location>
</feature>
<feature type="transmembrane region" description="Helical" evidence="1">
    <location>
        <begin position="280"/>
        <end position="300"/>
    </location>
</feature>
<name>COXX_ANAMM</name>
<comment type="function">
    <text evidence="1">Converts heme B (protoheme IX) to heme O by substitution of the vinyl group on carbon 2 of heme B porphyrin ring with a hydroxyethyl farnesyl side group.</text>
</comment>
<comment type="catalytic activity">
    <reaction evidence="1">
        <text>heme b + (2E,6E)-farnesyl diphosphate + H2O = Fe(II)-heme o + diphosphate</text>
        <dbReference type="Rhea" id="RHEA:28070"/>
        <dbReference type="ChEBI" id="CHEBI:15377"/>
        <dbReference type="ChEBI" id="CHEBI:33019"/>
        <dbReference type="ChEBI" id="CHEBI:60344"/>
        <dbReference type="ChEBI" id="CHEBI:60530"/>
        <dbReference type="ChEBI" id="CHEBI:175763"/>
        <dbReference type="EC" id="2.5.1.141"/>
    </reaction>
</comment>
<comment type="pathway">
    <text evidence="1">Porphyrin-containing compound metabolism; heme O biosynthesis; heme O from protoheme: step 1/1.</text>
</comment>
<comment type="subcellular location">
    <subcellularLocation>
        <location evidence="1">Cell inner membrane</location>
        <topology evidence="1">Multi-pass membrane protein</topology>
    </subcellularLocation>
</comment>
<comment type="miscellaneous">
    <text evidence="1">Carbon 2 of the heme B porphyrin ring is defined according to the Fischer nomenclature.</text>
</comment>
<comment type="similarity">
    <text evidence="1">Belongs to the UbiA prenyltransferase family. Protoheme IX farnesyltransferase subfamily.</text>
</comment>
<keyword id="KW-0997">Cell inner membrane</keyword>
<keyword id="KW-1003">Cell membrane</keyword>
<keyword id="KW-0350">Heme biosynthesis</keyword>
<keyword id="KW-0472">Membrane</keyword>
<keyword id="KW-0808">Transferase</keyword>
<keyword id="KW-0812">Transmembrane</keyword>
<keyword id="KW-1133">Transmembrane helix</keyword>
<protein>
    <recommendedName>
        <fullName evidence="1">Protoheme IX farnesyltransferase</fullName>
        <ecNumber evidence="1">2.5.1.141</ecNumber>
    </recommendedName>
    <alternativeName>
        <fullName evidence="1">Heme B farnesyltransferase</fullName>
    </alternativeName>
    <alternativeName>
        <fullName evidence="1">Heme O synthase</fullName>
    </alternativeName>
</protein>
<accession>Q5P9Y8</accession>
<organism>
    <name type="scientific">Anaplasma marginale (strain St. Maries)</name>
    <dbReference type="NCBI Taxonomy" id="234826"/>
    <lineage>
        <taxon>Bacteria</taxon>
        <taxon>Pseudomonadati</taxon>
        <taxon>Pseudomonadota</taxon>
        <taxon>Alphaproteobacteria</taxon>
        <taxon>Rickettsiales</taxon>
        <taxon>Anaplasmataceae</taxon>
        <taxon>Anaplasma</taxon>
    </lineage>
</organism>
<gene>
    <name evidence="1" type="primary">ctaB</name>
    <name type="ordered locus">AM1009</name>
</gene>
<proteinExistence type="inferred from homology"/>
<reference key="1">
    <citation type="journal article" date="2005" name="Proc. Natl. Acad. Sci. U.S.A.">
        <title>Complete genome sequencing of Anaplasma marginale reveals that the surface is skewed to two superfamilies of outer membrane proteins.</title>
        <authorList>
            <person name="Brayton K.A."/>
            <person name="Kappmeyer L.S."/>
            <person name="Herndon D.R."/>
            <person name="Dark M.J."/>
            <person name="Tibbals D.L."/>
            <person name="Palmer G.H."/>
            <person name="McGuire T.C."/>
            <person name="Knowles D.P. Jr."/>
        </authorList>
    </citation>
    <scope>NUCLEOTIDE SEQUENCE [LARGE SCALE GENOMIC DNA]</scope>
    <source>
        <strain>St. Maries</strain>
    </source>
</reference>